<geneLocation type="plasmid">
    <name>pDTG1</name>
</geneLocation>
<geneLocation type="plasmid">
    <name>NAH7</name>
</geneLocation>
<geneLocation type="plasmid">
    <name>NPL1</name>
</geneLocation>
<accession>Q52126</accession>
<accession>O33460</accession>
<accession>Q52122</accession>
<dbReference type="EC" id="1.18.1.7" evidence="4 5"/>
<dbReference type="EMBL" id="AF491307">
    <property type="protein sequence ID" value="AAA25904.1"/>
    <property type="molecule type" value="Genomic_DNA"/>
</dbReference>
<dbReference type="EMBL" id="M83949">
    <property type="protein sequence ID" value="AAA25900.1"/>
    <property type="molecule type" value="Genomic_DNA"/>
</dbReference>
<dbReference type="EMBL" id="AF010471">
    <property type="protein sequence ID" value="AAB62705.1"/>
    <property type="molecule type" value="Genomic_DNA"/>
</dbReference>
<dbReference type="PIR" id="JN0640">
    <property type="entry name" value="JN0640"/>
</dbReference>
<dbReference type="PIR" id="JN0642">
    <property type="entry name" value="JN0642"/>
</dbReference>
<dbReference type="RefSeq" id="NP_863070.1">
    <property type="nucleotide sequence ID" value="NC_004999.1"/>
</dbReference>
<dbReference type="RefSeq" id="WP_011117469.1">
    <property type="nucleotide sequence ID" value="NC_004999.1"/>
</dbReference>
<dbReference type="RefSeq" id="YP_534820.1">
    <property type="nucleotide sequence ID" value="NC_007926.1"/>
</dbReference>
<dbReference type="SMR" id="Q52126"/>
<dbReference type="KEGG" id="ag:AAA25904"/>
<dbReference type="BioCyc" id="MetaCyc:MONOMER-12800"/>
<dbReference type="BRENDA" id="1.18.1.7">
    <property type="organism ID" value="5092"/>
</dbReference>
<dbReference type="UniPathway" id="UPA00082"/>
<dbReference type="GO" id="GO:0051537">
    <property type="term" value="F:2 iron, 2 sulfur cluster binding"/>
    <property type="evidence" value="ECO:0000314"/>
    <property type="project" value="UniProtKB"/>
</dbReference>
<dbReference type="GO" id="GO:0071949">
    <property type="term" value="F:FAD binding"/>
    <property type="evidence" value="ECO:0000314"/>
    <property type="project" value="UniProtKB"/>
</dbReference>
<dbReference type="GO" id="GO:0008860">
    <property type="term" value="F:ferredoxin-NAD+ reductase activity"/>
    <property type="evidence" value="ECO:0000314"/>
    <property type="project" value="UniProtKB"/>
</dbReference>
<dbReference type="GO" id="GO:0004324">
    <property type="term" value="F:ferredoxin-NADP+ reductase activity"/>
    <property type="evidence" value="ECO:0000314"/>
    <property type="project" value="UniProtKB"/>
</dbReference>
<dbReference type="GO" id="GO:0046872">
    <property type="term" value="F:metal ion binding"/>
    <property type="evidence" value="ECO:0007669"/>
    <property type="project" value="UniProtKB-KW"/>
</dbReference>
<dbReference type="GO" id="GO:0009056">
    <property type="term" value="P:catabolic process"/>
    <property type="evidence" value="ECO:0007669"/>
    <property type="project" value="UniProtKB-KW"/>
</dbReference>
<dbReference type="CDD" id="cd00207">
    <property type="entry name" value="fer2"/>
    <property type="match status" value="1"/>
</dbReference>
<dbReference type="CDD" id="cd06187">
    <property type="entry name" value="O2ase_reductase_like"/>
    <property type="match status" value="1"/>
</dbReference>
<dbReference type="FunFam" id="2.40.30.10:FF:000093">
    <property type="entry name" value="Naphthalene 1,2-dioxygenase reductase component"/>
    <property type="match status" value="1"/>
</dbReference>
<dbReference type="FunFam" id="3.10.20.30:FF:000036">
    <property type="entry name" value="Naphthalene 1,2-dioxygenase reductase component"/>
    <property type="match status" value="1"/>
</dbReference>
<dbReference type="FunFam" id="3.40.50.80:FF:000047">
    <property type="entry name" value="Naphthalene 1,2-dioxygenase reductase component"/>
    <property type="match status" value="1"/>
</dbReference>
<dbReference type="Gene3D" id="3.10.20.30">
    <property type="match status" value="1"/>
</dbReference>
<dbReference type="Gene3D" id="3.40.50.80">
    <property type="entry name" value="Nucleotide-binding domain of ferredoxin-NADP reductase (FNR) module"/>
    <property type="match status" value="1"/>
</dbReference>
<dbReference type="Gene3D" id="2.40.30.10">
    <property type="entry name" value="Translation factors"/>
    <property type="match status" value="1"/>
</dbReference>
<dbReference type="InterPro" id="IPR036010">
    <property type="entry name" value="2Fe-2S_ferredoxin-like_sf"/>
</dbReference>
<dbReference type="InterPro" id="IPR001041">
    <property type="entry name" value="2Fe-2S_ferredoxin-type"/>
</dbReference>
<dbReference type="InterPro" id="IPR006058">
    <property type="entry name" value="2Fe2S_fd_BS"/>
</dbReference>
<dbReference type="InterPro" id="IPR012675">
    <property type="entry name" value="Beta-grasp_dom_sf"/>
</dbReference>
<dbReference type="InterPro" id="IPR008333">
    <property type="entry name" value="Cbr1-like_FAD-bd_dom"/>
</dbReference>
<dbReference type="InterPro" id="IPR017927">
    <property type="entry name" value="FAD-bd_FR_type"/>
</dbReference>
<dbReference type="InterPro" id="IPR001709">
    <property type="entry name" value="Flavoprot_Pyr_Nucl_cyt_Rdtase"/>
</dbReference>
<dbReference type="InterPro" id="IPR039261">
    <property type="entry name" value="FNR_nucleotide-bd"/>
</dbReference>
<dbReference type="InterPro" id="IPR050415">
    <property type="entry name" value="MRET"/>
</dbReference>
<dbReference type="InterPro" id="IPR001433">
    <property type="entry name" value="OxRdtase_FAD/NAD-bd"/>
</dbReference>
<dbReference type="InterPro" id="IPR017938">
    <property type="entry name" value="Riboflavin_synthase-like_b-brl"/>
</dbReference>
<dbReference type="PANTHER" id="PTHR47354">
    <property type="entry name" value="NADH OXIDOREDUCTASE HCR"/>
    <property type="match status" value="1"/>
</dbReference>
<dbReference type="PANTHER" id="PTHR47354:SF5">
    <property type="entry name" value="PROTEIN RFBI"/>
    <property type="match status" value="1"/>
</dbReference>
<dbReference type="Pfam" id="PF00970">
    <property type="entry name" value="FAD_binding_6"/>
    <property type="match status" value="1"/>
</dbReference>
<dbReference type="Pfam" id="PF00111">
    <property type="entry name" value="Fer2"/>
    <property type="match status" value="1"/>
</dbReference>
<dbReference type="Pfam" id="PF00175">
    <property type="entry name" value="NAD_binding_1"/>
    <property type="match status" value="1"/>
</dbReference>
<dbReference type="PRINTS" id="PR00371">
    <property type="entry name" value="FPNCR"/>
</dbReference>
<dbReference type="PRINTS" id="PR00410">
    <property type="entry name" value="PHEHYDRXLASE"/>
</dbReference>
<dbReference type="SUPFAM" id="SSF54292">
    <property type="entry name" value="2Fe-2S ferredoxin-like"/>
    <property type="match status" value="1"/>
</dbReference>
<dbReference type="SUPFAM" id="SSF52343">
    <property type="entry name" value="Ferredoxin reductase-like, C-terminal NADP-linked domain"/>
    <property type="match status" value="1"/>
</dbReference>
<dbReference type="SUPFAM" id="SSF63380">
    <property type="entry name" value="Riboflavin synthase domain-like"/>
    <property type="match status" value="1"/>
</dbReference>
<dbReference type="PROSITE" id="PS00197">
    <property type="entry name" value="2FE2S_FER_1"/>
    <property type="match status" value="1"/>
</dbReference>
<dbReference type="PROSITE" id="PS51085">
    <property type="entry name" value="2FE2S_FER_2"/>
    <property type="match status" value="1"/>
</dbReference>
<dbReference type="PROSITE" id="PS51384">
    <property type="entry name" value="FAD_FR"/>
    <property type="match status" value="1"/>
</dbReference>
<proteinExistence type="evidence at protein level"/>
<feature type="chain" id="PRO_0000167657" description="Naphthalene 1,2-dioxygenase system ferredoxin--NAD(P)(+), reductase component">
    <location>
        <begin position="1"/>
        <end position="328"/>
    </location>
</feature>
<feature type="domain" description="2Fe-2S ferredoxin-type" evidence="1">
    <location>
        <begin position="1"/>
        <end position="89"/>
    </location>
</feature>
<feature type="domain" description="FAD-binding FR-type" evidence="2">
    <location>
        <begin position="96"/>
        <end position="193"/>
    </location>
</feature>
<feature type="binding site" evidence="1">
    <location>
        <position position="35"/>
    </location>
    <ligand>
        <name>[2Fe-2S] cluster</name>
        <dbReference type="ChEBI" id="CHEBI:190135"/>
    </ligand>
</feature>
<feature type="binding site" evidence="1">
    <location>
        <position position="40"/>
    </location>
    <ligand>
        <name>[2Fe-2S] cluster</name>
        <dbReference type="ChEBI" id="CHEBI:190135"/>
    </ligand>
</feature>
<feature type="binding site" evidence="1">
    <location>
        <position position="43"/>
    </location>
    <ligand>
        <name>[2Fe-2S] cluster</name>
        <dbReference type="ChEBI" id="CHEBI:190135"/>
    </ligand>
</feature>
<feature type="binding site" evidence="1">
    <location>
        <position position="73"/>
    </location>
    <ligand>
        <name>[2Fe-2S] cluster</name>
        <dbReference type="ChEBI" id="CHEBI:190135"/>
    </ligand>
</feature>
<feature type="sequence variant" description="In strain: BS202.">
    <original>N</original>
    <variation>K</variation>
    <location>
        <position position="8"/>
    </location>
</feature>
<feature type="sequence variant" description="In strain: G7.">
    <original>I</original>
    <variation>L</variation>
    <location>
        <position position="11"/>
    </location>
</feature>
<feature type="sequence variant" description="In strain: G7.">
    <original>P</original>
    <variation>S</variation>
    <location>
        <position position="13"/>
    </location>
</feature>
<feature type="sequence variant" description="In strain: G7.">
    <original>A</original>
    <variation>P</variation>
    <location>
        <position position="16"/>
    </location>
</feature>
<feature type="sequence variant" description="In strain: G7.">
    <original>L</original>
    <variation>M</variation>
    <location>
        <position position="36"/>
    </location>
</feature>
<feature type="sequence variant" description="In strain: G7.">
    <original>I</original>
    <variation>T</variation>
    <location>
        <position position="48"/>
    </location>
</feature>
<feature type="sequence variant" description="In strain: G7.">
    <original>EN</original>
    <variation>GS</variation>
    <location>
        <begin position="58"/>
        <end position="59"/>
    </location>
</feature>
<feature type="sequence variant" description="In strain: G7.">
    <original>QS</original>
    <variation>LP</variation>
    <location>
        <begin position="61"/>
        <end position="62"/>
    </location>
</feature>
<feature type="sequence variant" description="In strain: G7.">
    <original>T</original>
    <variation>V</variation>
    <location>
        <position position="65"/>
    </location>
</feature>
<feature type="sequence variant" description="In strain: G7.">
    <original>KQ</original>
    <variation>EH</variation>
    <location>
        <begin position="67"/>
        <end position="68"/>
    </location>
</feature>
<feature type="sequence variant" description="In strain: G7.">
    <original>G</original>
    <variation>H</variation>
    <location>
        <position position="79"/>
    </location>
</feature>
<feature type="sequence variant" description="In strain: G7.">
    <original>V</original>
    <variation>I</variation>
    <location>
        <position position="85"/>
    </location>
</feature>
<feature type="sequence variant" description="In strain: G7.">
    <original>A</original>
    <variation>T</variation>
    <location>
        <position position="88"/>
    </location>
</feature>
<feature type="sequence variant" description="In strain: G7.">
    <original>S</original>
    <variation>A</variation>
    <location>
        <position position="121"/>
    </location>
</feature>
<feature type="sequence variant" description="In strain: G7.">
    <original>K</original>
    <variation>N</variation>
    <location>
        <position position="195"/>
    </location>
</feature>
<feature type="sequence variant" description="In strain: G7.">
    <original>S</original>
    <variation>L</variation>
    <location>
        <position position="222"/>
    </location>
</feature>
<feature type="sequence variant" description="In strain: G7.">
    <original>T</original>
    <variation>M</variation>
    <location>
        <position position="264"/>
    </location>
</feature>
<feature type="sequence variant" description="In strain: G7.">
    <original>G</original>
    <variation>S</variation>
    <location>
        <position position="270"/>
    </location>
</feature>
<feature type="sequence variant" description="In strain: G7.">
    <original>I</original>
    <variation>V</variation>
    <location>
        <position position="276"/>
    </location>
</feature>
<feature type="sequence variant" description="In strain: G7.">
    <original>L</original>
    <variation>I</variation>
    <location>
        <position position="285"/>
    </location>
</feature>
<name>NDOR_PSEPU</name>
<evidence type="ECO:0000255" key="1">
    <source>
        <dbReference type="PROSITE-ProRule" id="PRU00465"/>
    </source>
</evidence>
<evidence type="ECO:0000255" key="2">
    <source>
        <dbReference type="PROSITE-ProRule" id="PRU00716"/>
    </source>
</evidence>
<evidence type="ECO:0000269" key="3">
    <source>
    </source>
</evidence>
<evidence type="ECO:0000269" key="4">
    <source>
    </source>
</evidence>
<evidence type="ECO:0000269" key="5">
    <source>
    </source>
</evidence>
<evidence type="ECO:0000303" key="6">
    <source>
    </source>
</evidence>
<evidence type="ECO:0000303" key="7">
    <source>
    </source>
</evidence>
<evidence type="ECO:0000305" key="8"/>
<evidence type="ECO:0000305" key="9">
    <source>
    </source>
</evidence>
<evidence type="ECO:0000305" key="10">
    <source>
    </source>
</evidence>
<evidence type="ECO:0000305" key="11">
    <source>
    </source>
</evidence>
<keyword id="KW-0001">2Fe-2S</keyword>
<keyword id="KW-0058">Aromatic hydrocarbons catabolism</keyword>
<keyword id="KW-0903">Direct protein sequencing</keyword>
<keyword id="KW-0274">FAD</keyword>
<keyword id="KW-0285">Flavoprotein</keyword>
<keyword id="KW-0408">Iron</keyword>
<keyword id="KW-0411">Iron-sulfur</keyword>
<keyword id="KW-0479">Metal-binding</keyword>
<keyword id="KW-0520">NAD</keyword>
<keyword id="KW-0521">NADP</keyword>
<keyword id="KW-0560">Oxidoreductase</keyword>
<keyword id="KW-0614">Plasmid</keyword>
<protein>
    <recommendedName>
        <fullName evidence="6">Naphthalene 1,2-dioxygenase system ferredoxin--NAD(P)(+), reductase component</fullName>
        <ecNumber evidence="4 5">1.18.1.7</ecNumber>
    </recommendedName>
    <alternativeName>
        <fullName evidence="6">Ferredoxin--NAD(P)(+) reductase (naphthalene dioxygenase ferredoxin-specific)</fullName>
    </alternativeName>
</protein>
<organism>
    <name type="scientific">Pseudomonas putida</name>
    <name type="common">Arthrobacter siderocapsulatus</name>
    <dbReference type="NCBI Taxonomy" id="303"/>
    <lineage>
        <taxon>Bacteria</taxon>
        <taxon>Pseudomonadati</taxon>
        <taxon>Pseudomonadota</taxon>
        <taxon>Gammaproteobacteria</taxon>
        <taxon>Pseudomonadales</taxon>
        <taxon>Pseudomonadaceae</taxon>
        <taxon>Pseudomonas</taxon>
    </lineage>
</organism>
<comment type="function">
    <text evidence="3 4 5">Component of the naphthalene dioxygenase (NDO) multicomponent enzyme system which catalyzes the incorporation of both atoms of molecular oxygen into naphthalene to form cis-(1R,2S)-dihydroxy-1,2-dihydronaphthalene (PubMed:10692370, PubMed:2294092, PubMed:7037744). Ferredoxin reductase catalyzes the transfer of electrons from NADH to ferredoxin (NdoA) (PubMed:2294092). NADPH is also effective but yields only 39% of the activity obtained with NADH (PubMed:2294092, PubMed:7037744). Also able to catalyze the cis-dihydroxylation of biphenyl and phenanthrene (PubMed:10692370).</text>
</comment>
<comment type="catalytic activity">
    <reaction evidence="4 5">
        <text>2 reduced [2Fe-2S]-[ferredoxin] + NAD(+) + H(+) = 2 oxidized [2Fe-2S]-[ferredoxin] + NADH</text>
        <dbReference type="Rhea" id="RHEA:16521"/>
        <dbReference type="Rhea" id="RHEA-COMP:10000"/>
        <dbReference type="Rhea" id="RHEA-COMP:10001"/>
        <dbReference type="ChEBI" id="CHEBI:15378"/>
        <dbReference type="ChEBI" id="CHEBI:33737"/>
        <dbReference type="ChEBI" id="CHEBI:33738"/>
        <dbReference type="ChEBI" id="CHEBI:57540"/>
        <dbReference type="ChEBI" id="CHEBI:57945"/>
        <dbReference type="EC" id="1.18.1.7"/>
    </reaction>
</comment>
<comment type="catalytic activity">
    <reaction evidence="4 5">
        <text>2 reduced [2Fe-2S]-[ferredoxin] + NADP(+) + H(+) = 2 oxidized [2Fe-2S]-[ferredoxin] + NADPH</text>
        <dbReference type="Rhea" id="RHEA:20125"/>
        <dbReference type="Rhea" id="RHEA-COMP:10000"/>
        <dbReference type="Rhea" id="RHEA-COMP:10001"/>
        <dbReference type="ChEBI" id="CHEBI:15378"/>
        <dbReference type="ChEBI" id="CHEBI:33737"/>
        <dbReference type="ChEBI" id="CHEBI:33738"/>
        <dbReference type="ChEBI" id="CHEBI:57783"/>
        <dbReference type="ChEBI" id="CHEBI:58349"/>
        <dbReference type="EC" id="1.18.1.7"/>
    </reaction>
</comment>
<comment type="cofactor">
    <cofactor evidence="4 11">
        <name>[2Fe-2S] cluster</name>
        <dbReference type="ChEBI" id="CHEBI:190135"/>
    </cofactor>
    <text evidence="4">Binds 1 [2Fe-2S] cluster.</text>
</comment>
<comment type="cofactor">
    <cofactor evidence="4 5">
        <name>FAD</name>
        <dbReference type="ChEBI" id="CHEBI:57692"/>
    </cofactor>
    <text evidence="4 5">Binds 1 mole of FAD per mole of enzyme. Also able to use FMN, but the activity is less than that obtained with FAD.</text>
</comment>
<comment type="activity regulation">
    <text evidence="4">Strongly inhibited by p-chloromercuribenzoate. Also inhibited by N-ethylmaleimide and o-phenanthroline.</text>
</comment>
<comment type="pathway">
    <text evidence="9">Aromatic compound metabolism; naphthalene degradation.</text>
</comment>
<comment type="subunit">
    <text evidence="10">The naphthalene dioxygenase (NDO) multicomponent enzyme system is composed of an electron transfer component and a dioxygenase component (iron sulfur protein (ISP)). The electron transfer component is composed of a ferredoxin reductase (NdoR) and a ferredoxin (NdoA), and the dioxygenase component is formed of a heterohexamer (trimer of heterodimers) of three large alpha subunits (NdoB) and three small beta subunits (NdoC).</text>
</comment>
<comment type="similarity">
    <text evidence="8">Belongs to the bacterial ring-hydroxylating dioxygenase ferredoxin reductase component family.</text>
</comment>
<sequence length="328" mass="35501">MELLIQPNNRIIPFSAGANLLEVLRENGVAISYSCLSGRCGTCRCRVIDGSVIDSGAENGQSNLTDKQYVLACQSVLTGNCAIEVPEADEIVTHPARIIKGTVVAVESPTHDIRRLRVRLSKPFEFSPGQYATLQFSPEHARPYSMAGLPDDQEMEFHIRKVPGGRVTEYVFEHVREGTSIKLSGPLGTAYLRQKHTGPMLCVGGGTGLAPVLSIVRGALKSGMTNPILLYFGVRSQQDLYDAERLHKLAADHPQLTVHTVIATGPINEGQRAGLITDVIEKDILSLAGWRAYLCGAPAMVEALCTVTKHLGISPEHIYADAFYPGGI</sequence>
<reference key="1">
    <citation type="journal article" date="1993" name="Gene">
        <title>Sequences of genes encoding naphthalene dioxygenase in Pseudomonas putida strains G7 and NCIB 9816-4.</title>
        <authorList>
            <person name="Simon M.J."/>
            <person name="Osslund T.D."/>
            <person name="Saunders R."/>
            <person name="Ensley B.D."/>
            <person name="Suggs S."/>
            <person name="Harcourt A.A."/>
            <person name="Suen W.-C."/>
            <person name="Cruden D.L."/>
            <person name="Gibson D.T."/>
            <person name="Zylstra G.J."/>
        </authorList>
    </citation>
    <scope>NUCLEOTIDE SEQUENCE [GENOMIC DNA]</scope>
    <source>
        <strain>9816-4</strain>
        <strain>ATCC 17485 / DSM 50208 / JCM 6158 / NCIMB 12092 / Stanier 111 / Biotype A</strain>
        <plasmid>NAH7</plasmid>
        <plasmid>pDTG1</plasmid>
    </source>
</reference>
<reference key="2">
    <citation type="journal article" date="1996" name="Appl. Environ. Microbiol.">
        <title>Evaluation of strains isolated by growth on naphthalene and biphenyl for hybridization of genes to dioxygenase probes and polychlorinated biphenyl-degrading ability.</title>
        <authorList>
            <person name="Pellizari V.H."/>
            <person name="Bezborodnikov S.G."/>
            <person name="Quensen J.F. III"/>
            <person name="Tiedje J.M."/>
        </authorList>
    </citation>
    <scope>NUCLEOTIDE SEQUENCE [GENOMIC DNA]</scope>
    <source>
        <strain>BS202</strain>
        <plasmid>NPL1</plasmid>
    </source>
</reference>
<reference key="3">
    <citation type="journal article" date="1990" name="J. Bacteriol.">
        <title>Purification and properties of NADH-ferredoxin NAP reductase, a component of naphthalene dioxygenase from Pseudomonas sp. strain NCIB 9816.</title>
        <authorList>
            <person name="Haigler B.E."/>
            <person name="Gibson D.T."/>
        </authorList>
    </citation>
    <scope>PROTEIN SEQUENCE OF 1-25</scope>
    <scope>FUNCTION</scope>
    <scope>CATALYTIC ACTIVITY</scope>
    <scope>COFACTOR</scope>
    <scope>ACTIVITY REGULATION</scope>
    <scope>SUBUNIT</scope>
    <scope>SUBSTRATE SPECIFICITY</scope>
    <source>
        <strain>DSM 8368 / NCIMB 9816 / PG</strain>
    </source>
</reference>
<reference key="4">
    <citation type="journal article" date="1982" name="J. Bacteriol.">
        <title>Oxidation of naphthalene by a multicomponent enzyme system from Pseudomonas sp. strain NCIB 9816.</title>
        <authorList>
            <person name="Ensley B.D."/>
            <person name="Gibson D.T."/>
            <person name="Laborde A.L."/>
        </authorList>
    </citation>
    <scope>FUNCTION</scope>
    <scope>CATALYTIC ACTIVITY</scope>
    <scope>COFACTOR</scope>
    <scope>SUBSTRATE SPECIFICITY</scope>
    <source>
        <strain>DSM 8368 / NCIMB 9816 / PG</strain>
    </source>
</reference>
<reference key="5">
    <citation type="journal article" date="2000" name="J. Bacteriol.">
        <title>Substrate specificity of naphthalene dioxygenase: effect of specific amino acids at the active site of the enzyme.</title>
        <authorList>
            <person name="Parales R.E."/>
            <person name="Lee K."/>
            <person name="Resnick S.M."/>
            <person name="Jiang H."/>
            <person name="Lessner D.J."/>
            <person name="Gibson D.T."/>
        </authorList>
    </citation>
    <scope>FUNCTION</scope>
    <scope>SUBSTRATE SPECIFICITY</scope>
    <scope>PATHWAY</scope>
    <source>
        <strain>NCIMB 9816-4</strain>
    </source>
</reference>
<gene>
    <name type="primary">ndoR</name>
    <name type="synonym">nahA1</name>
    <name evidence="7" type="synonym">nahAA</name>
</gene>